<comment type="function">
    <text evidence="1">Cell wall formation. Adds enolpyruvyl to UDP-N-acetylglucosamine.</text>
</comment>
<comment type="catalytic activity">
    <reaction evidence="1">
        <text>phosphoenolpyruvate + UDP-N-acetyl-alpha-D-glucosamine = UDP-N-acetyl-3-O-(1-carboxyvinyl)-alpha-D-glucosamine + phosphate</text>
        <dbReference type="Rhea" id="RHEA:18681"/>
        <dbReference type="ChEBI" id="CHEBI:43474"/>
        <dbReference type="ChEBI" id="CHEBI:57705"/>
        <dbReference type="ChEBI" id="CHEBI:58702"/>
        <dbReference type="ChEBI" id="CHEBI:68483"/>
        <dbReference type="EC" id="2.5.1.7"/>
    </reaction>
</comment>
<comment type="pathway">
    <text evidence="1">Cell wall biogenesis; peptidoglycan biosynthesis.</text>
</comment>
<comment type="subcellular location">
    <subcellularLocation>
        <location evidence="1">Cytoplasm</location>
    </subcellularLocation>
</comment>
<comment type="similarity">
    <text evidence="1">Belongs to the EPSP synthase family. MurA subfamily.</text>
</comment>
<proteinExistence type="inferred from homology"/>
<organism>
    <name type="scientific">Syntrophotalea carbinolica (strain DSM 2380 / NBRC 103641 / GraBd1)</name>
    <name type="common">Pelobacter carbinolicus</name>
    <dbReference type="NCBI Taxonomy" id="338963"/>
    <lineage>
        <taxon>Bacteria</taxon>
        <taxon>Pseudomonadati</taxon>
        <taxon>Thermodesulfobacteriota</taxon>
        <taxon>Desulfuromonadia</taxon>
        <taxon>Desulfuromonadales</taxon>
        <taxon>Syntrophotaleaceae</taxon>
        <taxon>Syntrophotalea</taxon>
    </lineage>
</organism>
<evidence type="ECO:0000255" key="1">
    <source>
        <dbReference type="HAMAP-Rule" id="MF_00111"/>
    </source>
</evidence>
<gene>
    <name evidence="1" type="primary">murA</name>
    <name type="ordered locus">Pcar_2690</name>
</gene>
<name>MURA_SYNC1</name>
<keyword id="KW-0131">Cell cycle</keyword>
<keyword id="KW-0132">Cell division</keyword>
<keyword id="KW-0133">Cell shape</keyword>
<keyword id="KW-0961">Cell wall biogenesis/degradation</keyword>
<keyword id="KW-0963">Cytoplasm</keyword>
<keyword id="KW-0573">Peptidoglycan synthesis</keyword>
<keyword id="KW-0670">Pyruvate</keyword>
<keyword id="KW-1185">Reference proteome</keyword>
<keyword id="KW-0808">Transferase</keyword>
<accession>Q3A131</accession>
<reference key="1">
    <citation type="submission" date="2005-10" db="EMBL/GenBank/DDBJ databases">
        <title>Complete sequence of Pelobacter carbinolicus DSM 2380.</title>
        <authorList>
            <person name="Copeland A."/>
            <person name="Lucas S."/>
            <person name="Lapidus A."/>
            <person name="Barry K."/>
            <person name="Detter J.C."/>
            <person name="Glavina T."/>
            <person name="Hammon N."/>
            <person name="Israni S."/>
            <person name="Pitluck S."/>
            <person name="Chertkov O."/>
            <person name="Schmutz J."/>
            <person name="Larimer F."/>
            <person name="Land M."/>
            <person name="Kyrpides N."/>
            <person name="Ivanova N."/>
            <person name="Richardson P."/>
        </authorList>
    </citation>
    <scope>NUCLEOTIDE SEQUENCE [LARGE SCALE GENOMIC DNA]</scope>
    <source>
        <strain>DSM 2380 / NBRC 103641 / GraBd1</strain>
    </source>
</reference>
<dbReference type="EC" id="2.5.1.7" evidence="1"/>
<dbReference type="EMBL" id="CP000142">
    <property type="protein sequence ID" value="ABA89926.1"/>
    <property type="molecule type" value="Genomic_DNA"/>
</dbReference>
<dbReference type="RefSeq" id="WP_011342469.1">
    <property type="nucleotide sequence ID" value="NC_007498.2"/>
</dbReference>
<dbReference type="SMR" id="Q3A131"/>
<dbReference type="STRING" id="338963.Pcar_2690"/>
<dbReference type="KEGG" id="pca:Pcar_2690"/>
<dbReference type="eggNOG" id="COG0766">
    <property type="taxonomic scope" value="Bacteria"/>
</dbReference>
<dbReference type="HOGENOM" id="CLU_027387_0_0_7"/>
<dbReference type="OrthoDB" id="9803760at2"/>
<dbReference type="UniPathway" id="UPA00219"/>
<dbReference type="Proteomes" id="UP000002534">
    <property type="component" value="Chromosome"/>
</dbReference>
<dbReference type="GO" id="GO:0005737">
    <property type="term" value="C:cytoplasm"/>
    <property type="evidence" value="ECO:0007669"/>
    <property type="project" value="UniProtKB-SubCell"/>
</dbReference>
<dbReference type="GO" id="GO:0008760">
    <property type="term" value="F:UDP-N-acetylglucosamine 1-carboxyvinyltransferase activity"/>
    <property type="evidence" value="ECO:0007669"/>
    <property type="project" value="UniProtKB-UniRule"/>
</dbReference>
<dbReference type="GO" id="GO:0051301">
    <property type="term" value="P:cell division"/>
    <property type="evidence" value="ECO:0007669"/>
    <property type="project" value="UniProtKB-KW"/>
</dbReference>
<dbReference type="GO" id="GO:0071555">
    <property type="term" value="P:cell wall organization"/>
    <property type="evidence" value="ECO:0007669"/>
    <property type="project" value="UniProtKB-KW"/>
</dbReference>
<dbReference type="GO" id="GO:0009252">
    <property type="term" value="P:peptidoglycan biosynthetic process"/>
    <property type="evidence" value="ECO:0007669"/>
    <property type="project" value="UniProtKB-UniRule"/>
</dbReference>
<dbReference type="GO" id="GO:0008360">
    <property type="term" value="P:regulation of cell shape"/>
    <property type="evidence" value="ECO:0007669"/>
    <property type="project" value="UniProtKB-KW"/>
</dbReference>
<dbReference type="GO" id="GO:0019277">
    <property type="term" value="P:UDP-N-acetylgalactosamine biosynthetic process"/>
    <property type="evidence" value="ECO:0007669"/>
    <property type="project" value="InterPro"/>
</dbReference>
<dbReference type="CDD" id="cd01555">
    <property type="entry name" value="UdpNAET"/>
    <property type="match status" value="1"/>
</dbReference>
<dbReference type="FunFam" id="3.65.10.10:FF:000001">
    <property type="entry name" value="UDP-N-acetylglucosamine 1-carboxyvinyltransferase"/>
    <property type="match status" value="1"/>
</dbReference>
<dbReference type="Gene3D" id="3.65.10.10">
    <property type="entry name" value="Enolpyruvate transferase domain"/>
    <property type="match status" value="2"/>
</dbReference>
<dbReference type="HAMAP" id="MF_00111">
    <property type="entry name" value="MurA"/>
    <property type="match status" value="1"/>
</dbReference>
<dbReference type="InterPro" id="IPR001986">
    <property type="entry name" value="Enolpyruvate_Tfrase_dom"/>
</dbReference>
<dbReference type="InterPro" id="IPR036968">
    <property type="entry name" value="Enolpyruvate_Tfrase_sf"/>
</dbReference>
<dbReference type="InterPro" id="IPR050068">
    <property type="entry name" value="MurA_subfamily"/>
</dbReference>
<dbReference type="InterPro" id="IPR013792">
    <property type="entry name" value="RNA3'P_cycl/enolpyr_Trfase_a/b"/>
</dbReference>
<dbReference type="InterPro" id="IPR005750">
    <property type="entry name" value="UDP_GlcNAc_COvinyl_MurA"/>
</dbReference>
<dbReference type="NCBIfam" id="TIGR01072">
    <property type="entry name" value="murA"/>
    <property type="match status" value="1"/>
</dbReference>
<dbReference type="NCBIfam" id="NF006873">
    <property type="entry name" value="PRK09369.1"/>
    <property type="match status" value="1"/>
</dbReference>
<dbReference type="PANTHER" id="PTHR43783">
    <property type="entry name" value="UDP-N-ACETYLGLUCOSAMINE 1-CARBOXYVINYLTRANSFERASE"/>
    <property type="match status" value="1"/>
</dbReference>
<dbReference type="PANTHER" id="PTHR43783:SF1">
    <property type="entry name" value="UDP-N-ACETYLGLUCOSAMINE 1-CARBOXYVINYLTRANSFERASE"/>
    <property type="match status" value="1"/>
</dbReference>
<dbReference type="Pfam" id="PF00275">
    <property type="entry name" value="EPSP_synthase"/>
    <property type="match status" value="1"/>
</dbReference>
<dbReference type="SUPFAM" id="SSF55205">
    <property type="entry name" value="EPT/RTPC-like"/>
    <property type="match status" value="1"/>
</dbReference>
<protein>
    <recommendedName>
        <fullName evidence="1">UDP-N-acetylglucosamine 1-carboxyvinyltransferase</fullName>
        <ecNumber evidence="1">2.5.1.7</ecNumber>
    </recommendedName>
    <alternativeName>
        <fullName evidence="1">Enoylpyruvate transferase</fullName>
    </alternativeName>
    <alternativeName>
        <fullName evidence="1">UDP-N-acetylglucosamine enolpyruvyl transferase</fullName>
        <shortName evidence="1">EPT</shortName>
    </alternativeName>
</protein>
<sequence length="417" mass="44590">MDKIVIHGGNRLKGEVRISGAKNSALPLLFATLLAPGQHQLENVPALRDISTAGKLLSILGAEVHSQEGVFSVDATRIRSVEAPYDLVRTMRASVLVLGPLLARLGHARVSLPGGCAIGARPINLHLKGLEAMGAEIDLDHGYVEARAKRLHGANIYLDIPTVGGTENLLMAACLAQGTTVIENAACEPEIVDLATALTCMGARIEGAGTDRIVVEGVDELQPLHYAVMPDRIEAGTFMVAAAMTRGDVRLLGARQADLEALISKLQEAGVTISAEDHALRVRGPRRIAPVDIKTQPHPGFPTDMQAQFMALMSIADGTSVVTESVFENRFMHVCELQRLGADIAIEGKTAKVRGVKELLGAPVMATDLRASASLVLAGLAAENTTEVSRIYHLDRGYERLEEKFRNLGAHIERIKG</sequence>
<feature type="chain" id="PRO_0000231235" description="UDP-N-acetylglucosamine 1-carboxyvinyltransferase">
    <location>
        <begin position="1"/>
        <end position="417"/>
    </location>
</feature>
<feature type="active site" description="Proton donor" evidence="1">
    <location>
        <position position="116"/>
    </location>
</feature>
<feature type="binding site" evidence="1">
    <location>
        <begin position="22"/>
        <end position="23"/>
    </location>
    <ligand>
        <name>phosphoenolpyruvate</name>
        <dbReference type="ChEBI" id="CHEBI:58702"/>
    </ligand>
</feature>
<feature type="binding site" evidence="1">
    <location>
        <position position="92"/>
    </location>
    <ligand>
        <name>UDP-N-acetyl-alpha-D-glucosamine</name>
        <dbReference type="ChEBI" id="CHEBI:57705"/>
    </ligand>
</feature>
<feature type="binding site" evidence="1">
    <location>
        <position position="304"/>
    </location>
    <ligand>
        <name>UDP-N-acetyl-alpha-D-glucosamine</name>
        <dbReference type="ChEBI" id="CHEBI:57705"/>
    </ligand>
</feature>
<feature type="binding site" evidence="1">
    <location>
        <position position="326"/>
    </location>
    <ligand>
        <name>UDP-N-acetyl-alpha-D-glucosamine</name>
        <dbReference type="ChEBI" id="CHEBI:57705"/>
    </ligand>
</feature>
<feature type="modified residue" description="2-(S-cysteinyl)pyruvic acid O-phosphothioketal" evidence="1">
    <location>
        <position position="116"/>
    </location>
</feature>